<sequence>MPIMPDTWIRQMAREKGMIEPFVEAQKREGVISYGLSSYGYDARVAEEFKIFTDVDSAIVDPKNFASNSFVTRTGDITIPPNSFALAHTVEYFRIPRDTLVVCLGKSTYARCGIIVNVTPLEPEWEGQVTIEISNTTPLPARIYANEGICQFLFFQGASPCEVSYADRAGKYMRQSGVTTPRL</sequence>
<feature type="chain" id="PRO_1000009730" description="dCTP deaminase">
    <location>
        <begin position="1"/>
        <end position="183"/>
    </location>
</feature>
<feature type="active site" description="Proton donor/acceptor" evidence="1">
    <location>
        <position position="132"/>
    </location>
</feature>
<feature type="binding site" evidence="1">
    <location>
        <begin position="106"/>
        <end position="111"/>
    </location>
    <ligand>
        <name>dCTP</name>
        <dbReference type="ChEBI" id="CHEBI:61481"/>
    </ligand>
</feature>
<feature type="binding site" evidence="1">
    <location>
        <position position="151"/>
    </location>
    <ligand>
        <name>dCTP</name>
        <dbReference type="ChEBI" id="CHEBI:61481"/>
    </ligand>
</feature>
<feature type="binding site" evidence="1">
    <location>
        <position position="165"/>
    </location>
    <ligand>
        <name>dCTP</name>
        <dbReference type="ChEBI" id="CHEBI:61481"/>
    </ligand>
</feature>
<feature type="binding site" evidence="1">
    <location>
        <position position="175"/>
    </location>
    <ligand>
        <name>dCTP</name>
        <dbReference type="ChEBI" id="CHEBI:61481"/>
    </ligand>
</feature>
<keyword id="KW-0378">Hydrolase</keyword>
<keyword id="KW-0546">Nucleotide metabolism</keyword>
<keyword id="KW-0547">Nucleotide-binding</keyword>
<keyword id="KW-1185">Reference proteome</keyword>
<evidence type="ECO:0000255" key="1">
    <source>
        <dbReference type="HAMAP-Rule" id="MF_00146"/>
    </source>
</evidence>
<proteinExistence type="inferred from homology"/>
<organism>
    <name type="scientific">Gluconobacter oxydans (strain 621H)</name>
    <name type="common">Gluconobacter suboxydans</name>
    <dbReference type="NCBI Taxonomy" id="290633"/>
    <lineage>
        <taxon>Bacteria</taxon>
        <taxon>Pseudomonadati</taxon>
        <taxon>Pseudomonadota</taxon>
        <taxon>Alphaproteobacteria</taxon>
        <taxon>Acetobacterales</taxon>
        <taxon>Acetobacteraceae</taxon>
        <taxon>Gluconobacter</taxon>
    </lineage>
</organism>
<comment type="function">
    <text evidence="1">Catalyzes the deamination of dCTP to dUTP.</text>
</comment>
<comment type="catalytic activity">
    <reaction evidence="1">
        <text>dCTP + H2O + H(+) = dUTP + NH4(+)</text>
        <dbReference type="Rhea" id="RHEA:22680"/>
        <dbReference type="ChEBI" id="CHEBI:15377"/>
        <dbReference type="ChEBI" id="CHEBI:15378"/>
        <dbReference type="ChEBI" id="CHEBI:28938"/>
        <dbReference type="ChEBI" id="CHEBI:61481"/>
        <dbReference type="ChEBI" id="CHEBI:61555"/>
        <dbReference type="EC" id="3.5.4.13"/>
    </reaction>
</comment>
<comment type="pathway">
    <text evidence="1">Pyrimidine metabolism; dUMP biosynthesis; dUMP from dCTP (dUTP route): step 1/2.</text>
</comment>
<comment type="subunit">
    <text evidence="1">Homotrimer.</text>
</comment>
<comment type="similarity">
    <text evidence="1">Belongs to the dCTP deaminase family.</text>
</comment>
<name>DCD_GLUOX</name>
<reference key="1">
    <citation type="journal article" date="2005" name="Nat. Biotechnol.">
        <title>Complete genome sequence of the acetic acid bacterium Gluconobacter oxydans.</title>
        <authorList>
            <person name="Prust C."/>
            <person name="Hoffmeister M."/>
            <person name="Liesegang H."/>
            <person name="Wiezer A."/>
            <person name="Fricke W.F."/>
            <person name="Ehrenreich A."/>
            <person name="Gottschalk G."/>
            <person name="Deppenmeier U."/>
        </authorList>
    </citation>
    <scope>NUCLEOTIDE SEQUENCE [LARGE SCALE GENOMIC DNA]</scope>
    <source>
        <strain>621H</strain>
    </source>
</reference>
<accession>Q5FSM1</accession>
<protein>
    <recommendedName>
        <fullName evidence="1">dCTP deaminase</fullName>
        <ecNumber evidence="1">3.5.4.13</ecNumber>
    </recommendedName>
    <alternativeName>
        <fullName evidence="1">Deoxycytidine triphosphate deaminase</fullName>
    </alternativeName>
</protein>
<dbReference type="EC" id="3.5.4.13" evidence="1"/>
<dbReference type="EMBL" id="CP000009">
    <property type="protein sequence ID" value="AAW60625.1"/>
    <property type="molecule type" value="Genomic_DNA"/>
</dbReference>
<dbReference type="RefSeq" id="WP_011252421.1">
    <property type="nucleotide sequence ID" value="NZ_LT900338.1"/>
</dbReference>
<dbReference type="SMR" id="Q5FSM1"/>
<dbReference type="STRING" id="290633.GOX0851"/>
<dbReference type="GeneID" id="56905167"/>
<dbReference type="KEGG" id="gox:GOX0851"/>
<dbReference type="eggNOG" id="COG0717">
    <property type="taxonomic scope" value="Bacteria"/>
</dbReference>
<dbReference type="HOGENOM" id="CLU_087476_4_0_5"/>
<dbReference type="UniPathway" id="UPA00610">
    <property type="reaction ID" value="UER00665"/>
</dbReference>
<dbReference type="Proteomes" id="UP000006375">
    <property type="component" value="Chromosome"/>
</dbReference>
<dbReference type="GO" id="GO:0008829">
    <property type="term" value="F:dCTP deaminase activity"/>
    <property type="evidence" value="ECO:0007669"/>
    <property type="project" value="UniProtKB-UniRule"/>
</dbReference>
<dbReference type="GO" id="GO:0000166">
    <property type="term" value="F:nucleotide binding"/>
    <property type="evidence" value="ECO:0007669"/>
    <property type="project" value="UniProtKB-KW"/>
</dbReference>
<dbReference type="GO" id="GO:0006226">
    <property type="term" value="P:dUMP biosynthetic process"/>
    <property type="evidence" value="ECO:0007669"/>
    <property type="project" value="UniProtKB-UniPathway"/>
</dbReference>
<dbReference type="GO" id="GO:0006229">
    <property type="term" value="P:dUTP biosynthetic process"/>
    <property type="evidence" value="ECO:0007669"/>
    <property type="project" value="UniProtKB-UniRule"/>
</dbReference>
<dbReference type="CDD" id="cd07557">
    <property type="entry name" value="trimeric_dUTPase"/>
    <property type="match status" value="1"/>
</dbReference>
<dbReference type="FunFam" id="2.70.40.10:FF:000001">
    <property type="entry name" value="dCTP deaminase"/>
    <property type="match status" value="1"/>
</dbReference>
<dbReference type="Gene3D" id="2.70.40.10">
    <property type="match status" value="1"/>
</dbReference>
<dbReference type="HAMAP" id="MF_00146">
    <property type="entry name" value="dCTP_deaminase"/>
    <property type="match status" value="1"/>
</dbReference>
<dbReference type="InterPro" id="IPR011962">
    <property type="entry name" value="dCTP_deaminase"/>
</dbReference>
<dbReference type="InterPro" id="IPR036157">
    <property type="entry name" value="dUTPase-like_sf"/>
</dbReference>
<dbReference type="InterPro" id="IPR033704">
    <property type="entry name" value="dUTPase_trimeric"/>
</dbReference>
<dbReference type="NCBIfam" id="TIGR02274">
    <property type="entry name" value="dCTP_deam"/>
    <property type="match status" value="1"/>
</dbReference>
<dbReference type="PANTHER" id="PTHR42680">
    <property type="entry name" value="DCTP DEAMINASE"/>
    <property type="match status" value="1"/>
</dbReference>
<dbReference type="PANTHER" id="PTHR42680:SF3">
    <property type="entry name" value="DCTP DEAMINASE"/>
    <property type="match status" value="1"/>
</dbReference>
<dbReference type="Pfam" id="PF22769">
    <property type="entry name" value="DCD"/>
    <property type="match status" value="1"/>
</dbReference>
<dbReference type="SUPFAM" id="SSF51283">
    <property type="entry name" value="dUTPase-like"/>
    <property type="match status" value="1"/>
</dbReference>
<gene>
    <name evidence="1" type="primary">dcd</name>
    <name type="ordered locus">GOX0851</name>
</gene>